<comment type="function">
    <text evidence="1">Appears to have dual functions such as cytoplasmic retention of attached NF-kappa-B proteins and generation of p52 by a cotranslational processing. The proteasome-mediated process ensures the production of both p52 and p100 and preserves their independent function. p52 binds to the kappa-B consensus sequence 5'-GGRNNYYCC-3', located in the enhancer region of genes involved in immune response and acute phase reactions. In concert with RELB, may play a role in the regulation of the circadian clock (By similarity).</text>
</comment>
<comment type="subunit">
    <text evidence="1">Active NF-kappa-B is a heterodimer of an about 52 kDa DNA-binding subunit and the weak DNA-binding subunit p65. Two heterodimers might form a labile tetramer (By similarity).</text>
</comment>
<comment type="subcellular location">
    <subcellularLocation>
        <location evidence="1">Nucleus</location>
    </subcellularLocation>
    <subcellularLocation>
        <location evidence="1">Cytoplasm</location>
    </subcellularLocation>
    <text evidence="1">Nuclear, but also found in the cytoplasm in an inactive form complexed to an inhibitor (I-kappa-B).</text>
</comment>
<comment type="tissue specificity">
    <text evidence="5">Expressed in spleen.</text>
</comment>
<comment type="domain">
    <text evidence="1">The C-terminus of p100 might be involved in cytoplasmic retention, inhibition of DNA-binding by p52 homodimers, and/or transcription activation.</text>
</comment>
<comment type="domain">
    <text evidence="1">The glycine-rich region (GRR) appears to be a critical element in the generation of p52.</text>
</comment>
<comment type="PTM">
    <text evidence="1">While translation occurs, the particular unfolded structure after the GRR repeat promotes the generation of p52 making it an acceptable substrate for the proteasome. This process is known as cotranslational processing. The processed form is active and the unprocessed form acts as an inhibitor (I kappa B-like), being able to form cytosolic complexes with NF-kappa B, trapping it in the cytoplasm. Complete folding of the region downstream of the GRR repeat precludes processing (By similarity).</text>
</comment>
<comment type="PTM">
    <text>Constitutive processing is tightly suppressed by its C-terminal processing inhibitory domain, named PID, which contains the death domain.</text>
</comment>
<sequence length="958" mass="105854">MMSVLKIENFDPYSCNGIEDRNGMGYSTALLNPIVLGQDLLMSYLSIIEQPKQRGFRFRYVCEGPSHRGLPGASSEKGKKTFPTVKIFNYVGMARIEVDLVTHTDPPRVHAHSLVGKHSNKTGNCIVTVGPEDMTAQFNNLGIVHVTKKSQTEILKEKMKRNILRNTGRNTLTEVEERKIEQEVKDLKKVTDLSIVRLKFTAYLPDSNGAYTLALPPVISDPIHDSKSPGASNLRISRMDKTAGSVKGGDEVYLLCDKVQKDDIEVQFYEDDENGWHAFGDFAPTDVHKQYAIVFRTPPYHTQKIDRPVTVFLQLKRKKGGDVSDSKQFTYYPLEQDKEEVERKRRKDLPTFNNHFYGGGSPMGGAPPGSSFGQGGGSNINYQYTGMNSAFYMSSPAGGGYHSSGHMMKHCSATNSSEKNQQPSISIKKEGEEASACSQTDSATTAQKEAQCQMIMRQANLRMLSLTQRTSRALLDYATTADPRMLLAVQRHLTATQDENGDTPLHLAVIHGQSSVIEQLVQIILSIPNQQILNMSNHLQQTPLHLGVITKQYSVVAFLLKAGADPTILDRYGNSVLHLAVQSEDDKMLGVLLKYPSVGQKNLINMPDYHGLSPVHWSVKMKNEKCLVLLVKAGANVNSAERKSGKSPLHIAVEMDNLNLAVFLVKKLHADINAKTYGGNTPLHLAASRGSPMLTRMLVNEGANVLSENDEPVNKLPSCNSDTSESDSDVQMDTDSDHHGDSDTDSSTAVDSECEHSAEEMHRREQRNIRPHCAMKRRYSGHTAVDLTKSQKVRDILSKHTPGSASWKQKGPEPVNVLALETNTVQRLEKLLNEGQTGADWTELASRLRLQSLVETYKNTSSPTESLLRNYELAGGNLKELINTLQSMGLNEGVELLCKSETYAKHHSPAESKNDSAYESQSMEVDQSSGNLMDDSQKQTIPVSAAELCPTTEPTIGQ</sequence>
<protein>
    <recommendedName>
        <fullName>Nuclear factor NF-kappa-B p100 subunit</fullName>
    </recommendedName>
    <alternativeName>
        <fullName>DNA-binding factor KBF2</fullName>
    </alternativeName>
    <alternativeName>
        <fullName>Nuclear factor of kappa light polypeptide gene enhancer in B-cells 2</fullName>
    </alternativeName>
    <component>
        <recommendedName>
            <fullName>Nuclear factor NF-kappa-B p52 subunit</fullName>
        </recommendedName>
    </component>
</protein>
<organism>
    <name type="scientific">Xenopus laevis</name>
    <name type="common">African clawed frog</name>
    <dbReference type="NCBI Taxonomy" id="8355"/>
    <lineage>
        <taxon>Eukaryota</taxon>
        <taxon>Metazoa</taxon>
        <taxon>Chordata</taxon>
        <taxon>Craniata</taxon>
        <taxon>Vertebrata</taxon>
        <taxon>Euteleostomi</taxon>
        <taxon>Amphibia</taxon>
        <taxon>Batrachia</taxon>
        <taxon>Anura</taxon>
        <taxon>Pipoidea</taxon>
        <taxon>Pipidae</taxon>
        <taxon>Xenopodinae</taxon>
        <taxon>Xenopus</taxon>
        <taxon>Xenopus</taxon>
    </lineage>
</organism>
<accession>O73630</accession>
<evidence type="ECO:0000250" key="1"/>
<evidence type="ECO:0000255" key="2"/>
<evidence type="ECO:0000255" key="3">
    <source>
        <dbReference type="PROSITE-ProRule" id="PRU00265"/>
    </source>
</evidence>
<evidence type="ECO:0000256" key="4">
    <source>
        <dbReference type="SAM" id="MobiDB-lite"/>
    </source>
</evidence>
<evidence type="ECO:0000269" key="5">
    <source>
    </source>
</evidence>
<gene>
    <name type="primary">nfkb2</name>
</gene>
<keyword id="KW-0010">Activator</keyword>
<keyword id="KW-0040">ANK repeat</keyword>
<keyword id="KW-0090">Biological rhythms</keyword>
<keyword id="KW-0963">Cytoplasm</keyword>
<keyword id="KW-0238">DNA-binding</keyword>
<keyword id="KW-0539">Nucleus</keyword>
<keyword id="KW-1185">Reference proteome</keyword>
<keyword id="KW-0677">Repeat</keyword>
<keyword id="KW-0678">Repressor</keyword>
<keyword id="KW-0804">Transcription</keyword>
<keyword id="KW-0805">Transcription regulation</keyword>
<proteinExistence type="evidence at transcript level"/>
<reference key="1">
    <citation type="journal article" date="1998" name="Gene">
        <title>Identification and expression of the Xenopus homolog of mammalian p100-NFkappaB2.</title>
        <authorList>
            <person name="Suzuki K."/>
            <person name="Tsuchida J."/>
            <person name="Yamamoto T."/>
            <person name="Inoue J."/>
        </authorList>
    </citation>
    <scope>NUCLEOTIDE SEQUENCE [MRNA]</scope>
    <scope>TISSUE SPECIFICITY</scope>
    <source>
        <tissue>Oocyte</tissue>
    </source>
</reference>
<dbReference type="EMBL" id="AB002629">
    <property type="protein sequence ID" value="BAA25919.1"/>
    <property type="molecule type" value="mRNA"/>
</dbReference>
<dbReference type="RefSeq" id="NP_001081181.1">
    <property type="nucleotide sequence ID" value="NM_001087712.1"/>
</dbReference>
<dbReference type="SMR" id="O73630"/>
<dbReference type="BioGRID" id="99038">
    <property type="interactions" value="1"/>
</dbReference>
<dbReference type="IntAct" id="O73630">
    <property type="interactions" value="1"/>
</dbReference>
<dbReference type="GeneID" id="397698"/>
<dbReference type="KEGG" id="xla:397698"/>
<dbReference type="AGR" id="Xenbase:XB-GENE-970090"/>
<dbReference type="CTD" id="397698"/>
<dbReference type="Xenbase" id="XB-GENE-970090">
    <property type="gene designation" value="nfkb2.S"/>
</dbReference>
<dbReference type="OrthoDB" id="10254686at2759"/>
<dbReference type="Proteomes" id="UP000186698">
    <property type="component" value="Chromosome 7S"/>
</dbReference>
<dbReference type="Bgee" id="397698">
    <property type="expression patterns" value="Expressed in spleen and 19 other cell types or tissues"/>
</dbReference>
<dbReference type="GO" id="GO:0005737">
    <property type="term" value="C:cytoplasm"/>
    <property type="evidence" value="ECO:0007669"/>
    <property type="project" value="UniProtKB-SubCell"/>
</dbReference>
<dbReference type="GO" id="GO:0005634">
    <property type="term" value="C:nucleus"/>
    <property type="evidence" value="ECO:0007669"/>
    <property type="project" value="UniProtKB-SubCell"/>
</dbReference>
<dbReference type="GO" id="GO:0000981">
    <property type="term" value="F:DNA-binding transcription factor activity, RNA polymerase II-specific"/>
    <property type="evidence" value="ECO:0000318"/>
    <property type="project" value="GO_Central"/>
</dbReference>
<dbReference type="GO" id="GO:0000978">
    <property type="term" value="F:RNA polymerase II cis-regulatory region sequence-specific DNA binding"/>
    <property type="evidence" value="ECO:0000318"/>
    <property type="project" value="GO_Central"/>
</dbReference>
<dbReference type="GO" id="GO:0048511">
    <property type="term" value="P:rhythmic process"/>
    <property type="evidence" value="ECO:0007669"/>
    <property type="project" value="UniProtKB-KW"/>
</dbReference>
<dbReference type="GO" id="GO:0007165">
    <property type="term" value="P:signal transduction"/>
    <property type="evidence" value="ECO:0007669"/>
    <property type="project" value="InterPro"/>
</dbReference>
<dbReference type="CDD" id="cd08798">
    <property type="entry name" value="Death_NFkB2_p100"/>
    <property type="match status" value="1"/>
</dbReference>
<dbReference type="CDD" id="cd01177">
    <property type="entry name" value="IPT_NFkappaB"/>
    <property type="match status" value="1"/>
</dbReference>
<dbReference type="CDD" id="cd07934">
    <property type="entry name" value="RHD-n_NFkB2"/>
    <property type="match status" value="1"/>
</dbReference>
<dbReference type="FunFam" id="2.60.40.10:FF:000046">
    <property type="entry name" value="Nuclear factor NF-kappa-B p105 subunit"/>
    <property type="match status" value="1"/>
</dbReference>
<dbReference type="FunFam" id="2.60.40.340:FF:000004">
    <property type="entry name" value="Nuclear factor NF-kappa-B p105 subunit isoform 1"/>
    <property type="match status" value="1"/>
</dbReference>
<dbReference type="Gene3D" id="1.25.40.20">
    <property type="entry name" value="Ankyrin repeat-containing domain"/>
    <property type="match status" value="1"/>
</dbReference>
<dbReference type="Gene3D" id="1.10.533.10">
    <property type="entry name" value="Death Domain, Fas"/>
    <property type="match status" value="1"/>
</dbReference>
<dbReference type="Gene3D" id="2.60.40.10">
    <property type="entry name" value="Immunoglobulins"/>
    <property type="match status" value="1"/>
</dbReference>
<dbReference type="Gene3D" id="2.60.40.340">
    <property type="entry name" value="Rel homology domain (RHD), DNA-binding domain"/>
    <property type="match status" value="1"/>
</dbReference>
<dbReference type="InterPro" id="IPR002110">
    <property type="entry name" value="Ankyrin_rpt"/>
</dbReference>
<dbReference type="InterPro" id="IPR036770">
    <property type="entry name" value="Ankyrin_rpt-contain_sf"/>
</dbReference>
<dbReference type="InterPro" id="IPR011029">
    <property type="entry name" value="DEATH-like_dom_sf"/>
</dbReference>
<dbReference type="InterPro" id="IPR000488">
    <property type="entry name" value="Death_dom"/>
</dbReference>
<dbReference type="InterPro" id="IPR013783">
    <property type="entry name" value="Ig-like_fold"/>
</dbReference>
<dbReference type="InterPro" id="IPR014756">
    <property type="entry name" value="Ig_E-set"/>
</dbReference>
<dbReference type="InterPro" id="IPR002909">
    <property type="entry name" value="IPT_dom"/>
</dbReference>
<dbReference type="InterPro" id="IPR033926">
    <property type="entry name" value="IPT_NFkappaB"/>
</dbReference>
<dbReference type="InterPro" id="IPR000451">
    <property type="entry name" value="NFkB/Dor"/>
</dbReference>
<dbReference type="InterPro" id="IPR030497">
    <property type="entry name" value="NFkB_p100_RHD_N"/>
</dbReference>
<dbReference type="InterPro" id="IPR008967">
    <property type="entry name" value="p53-like_TF_DNA-bd_sf"/>
</dbReference>
<dbReference type="InterPro" id="IPR030492">
    <property type="entry name" value="RHD_CS"/>
</dbReference>
<dbReference type="InterPro" id="IPR032397">
    <property type="entry name" value="RHD_dimer"/>
</dbReference>
<dbReference type="InterPro" id="IPR011539">
    <property type="entry name" value="RHD_DNA_bind_dom"/>
</dbReference>
<dbReference type="InterPro" id="IPR037059">
    <property type="entry name" value="RHD_DNA_bind_dom_sf"/>
</dbReference>
<dbReference type="PANTHER" id="PTHR24169:SF21">
    <property type="entry name" value="NUCLEAR FACTOR NF-KAPPA-B P100 SUBUNIT"/>
    <property type="match status" value="1"/>
</dbReference>
<dbReference type="PANTHER" id="PTHR24169">
    <property type="entry name" value="NUCLEAR FACTOR NF-KAPPA-B PROTEIN"/>
    <property type="match status" value="1"/>
</dbReference>
<dbReference type="Pfam" id="PF12796">
    <property type="entry name" value="Ank_2"/>
    <property type="match status" value="2"/>
</dbReference>
<dbReference type="Pfam" id="PF00531">
    <property type="entry name" value="Death"/>
    <property type="match status" value="1"/>
</dbReference>
<dbReference type="Pfam" id="PF16179">
    <property type="entry name" value="RHD_dimer"/>
    <property type="match status" value="1"/>
</dbReference>
<dbReference type="Pfam" id="PF00554">
    <property type="entry name" value="RHD_DNA_bind"/>
    <property type="match status" value="1"/>
</dbReference>
<dbReference type="PRINTS" id="PR00057">
    <property type="entry name" value="NFKBTNSCPFCT"/>
</dbReference>
<dbReference type="SMART" id="SM00248">
    <property type="entry name" value="ANK"/>
    <property type="match status" value="6"/>
</dbReference>
<dbReference type="SMART" id="SM00005">
    <property type="entry name" value="DEATH"/>
    <property type="match status" value="1"/>
</dbReference>
<dbReference type="SMART" id="SM00429">
    <property type="entry name" value="IPT"/>
    <property type="match status" value="1"/>
</dbReference>
<dbReference type="SUPFAM" id="SSF48403">
    <property type="entry name" value="Ankyrin repeat"/>
    <property type="match status" value="1"/>
</dbReference>
<dbReference type="SUPFAM" id="SSF47986">
    <property type="entry name" value="DEATH domain"/>
    <property type="match status" value="1"/>
</dbReference>
<dbReference type="SUPFAM" id="SSF81296">
    <property type="entry name" value="E set domains"/>
    <property type="match status" value="1"/>
</dbReference>
<dbReference type="SUPFAM" id="SSF49417">
    <property type="entry name" value="p53-like transcription factors"/>
    <property type="match status" value="1"/>
</dbReference>
<dbReference type="PROSITE" id="PS50297">
    <property type="entry name" value="ANK_REP_REGION"/>
    <property type="match status" value="1"/>
</dbReference>
<dbReference type="PROSITE" id="PS50088">
    <property type="entry name" value="ANK_REPEAT"/>
    <property type="match status" value="5"/>
</dbReference>
<dbReference type="PROSITE" id="PS01204">
    <property type="entry name" value="REL_1"/>
    <property type="match status" value="1"/>
</dbReference>
<dbReference type="PROSITE" id="PS50254">
    <property type="entry name" value="REL_2"/>
    <property type="match status" value="1"/>
</dbReference>
<name>NFKB2_XENLA</name>
<feature type="chain" id="PRO_0000030327" description="Nuclear factor NF-kappa-B p100 subunit">
    <location>
        <begin position="1"/>
        <end position="958"/>
    </location>
</feature>
<feature type="chain" id="PRO_0000030328" description="Nuclear factor NF-kappa-B p52 subunit" evidence="1">
    <location>
        <begin position="1"/>
        <end position="467"/>
    </location>
</feature>
<feature type="domain" description="RHD" evidence="3">
    <location>
        <begin position="40"/>
        <end position="230"/>
    </location>
</feature>
<feature type="repeat" description="ANK 1">
    <location>
        <begin position="500"/>
        <end position="529"/>
    </location>
</feature>
<feature type="repeat" description="ANK 2">
    <location>
        <begin position="539"/>
        <end position="568"/>
    </location>
</feature>
<feature type="repeat" description="ANK 3">
    <location>
        <begin position="572"/>
        <end position="603"/>
    </location>
</feature>
<feature type="repeat" description="ANK 4">
    <location>
        <begin position="610"/>
        <end position="639"/>
    </location>
</feature>
<feature type="repeat" description="ANK 5">
    <location>
        <begin position="644"/>
        <end position="674"/>
    </location>
</feature>
<feature type="repeat" description="ANK 6">
    <location>
        <begin position="678"/>
        <end position="707"/>
    </location>
</feature>
<feature type="domain" description="Death">
    <location>
        <begin position="815"/>
        <end position="901"/>
    </location>
</feature>
<feature type="region of interest" description="Disordered" evidence="4">
    <location>
        <begin position="350"/>
        <end position="374"/>
    </location>
</feature>
<feature type="region of interest" description="GRR">
    <location>
        <begin position="352"/>
        <end position="390"/>
    </location>
</feature>
<feature type="region of interest" description="Disordered" evidence="4">
    <location>
        <begin position="411"/>
        <end position="442"/>
    </location>
</feature>
<feature type="region of interest" description="Disordered" evidence="4">
    <location>
        <begin position="705"/>
        <end position="766"/>
    </location>
</feature>
<feature type="region of interest" description="Disordered" evidence="4">
    <location>
        <begin position="904"/>
        <end position="958"/>
    </location>
</feature>
<feature type="short sequence motif" description="Nuclear localization signal" evidence="2">
    <location>
        <begin position="343"/>
        <end position="347"/>
    </location>
</feature>
<feature type="compositionally biased region" description="Gly residues" evidence="4">
    <location>
        <begin position="357"/>
        <end position="374"/>
    </location>
</feature>
<feature type="compositionally biased region" description="Polar residues" evidence="4">
    <location>
        <begin position="412"/>
        <end position="425"/>
    </location>
</feature>
<feature type="compositionally biased region" description="Acidic residues" evidence="4">
    <location>
        <begin position="724"/>
        <end position="734"/>
    </location>
</feature>
<feature type="compositionally biased region" description="Basic and acidic residues" evidence="4">
    <location>
        <begin position="753"/>
        <end position="766"/>
    </location>
</feature>
<feature type="compositionally biased region" description="Basic and acidic residues" evidence="4">
    <location>
        <begin position="904"/>
        <end position="916"/>
    </location>
</feature>
<feature type="compositionally biased region" description="Polar residues" evidence="4">
    <location>
        <begin position="917"/>
        <end position="931"/>
    </location>
</feature>
<feature type="site" description="Cleavage (when cotranslationally processed)">
    <location>
        <begin position="467"/>
        <end position="468"/>
    </location>
</feature>